<keyword id="KW-0687">Ribonucleoprotein</keyword>
<keyword id="KW-0689">Ribosomal protein</keyword>
<keyword id="KW-0694">RNA-binding</keyword>
<keyword id="KW-0699">rRNA-binding</keyword>
<gene>
    <name evidence="1" type="primary">rplV</name>
</gene>
<feature type="chain" id="PRO_0000125106" description="Large ribosomal subunit protein uL22">
    <location>
        <begin position="1"/>
        <end position="111"/>
    </location>
</feature>
<name>RL22_ACHLA</name>
<proteinExistence type="inferred from homology"/>
<reference key="1">
    <citation type="journal article" date="1992" name="J. Bacteriol.">
        <title>Evolutionary relationships of a plant-pathogenic mycoplasmalike organism and Acholeplasma laidlawii deduced from two ribosomal protein gene sequences.</title>
        <authorList>
            <person name="Lim P.O."/>
            <person name="Sears B.B."/>
        </authorList>
    </citation>
    <scope>NUCLEOTIDE SEQUENCE [GENOMIC DNA]</scope>
</reference>
<organism>
    <name type="scientific">Acholeplasma laidlawii</name>
    <dbReference type="NCBI Taxonomy" id="2148"/>
    <lineage>
        <taxon>Bacteria</taxon>
        <taxon>Bacillati</taxon>
        <taxon>Mycoplasmatota</taxon>
        <taxon>Mollicutes</taxon>
        <taxon>Acholeplasmatales</taxon>
        <taxon>Acholeplasmataceae</taxon>
        <taxon>Acholeplasma</taxon>
    </lineage>
</organism>
<protein>
    <recommendedName>
        <fullName evidence="1">Large ribosomal subunit protein uL22</fullName>
    </recommendedName>
    <alternativeName>
        <fullName evidence="2">50S ribosomal protein L22</fullName>
    </alternativeName>
</protein>
<comment type="function">
    <text evidence="1">This protein binds specifically to 23S rRNA; its binding is stimulated by other ribosomal proteins, e.g. L4, L17, and L20. It is important during the early stages of 50S assembly. It makes multiple contacts with different domains of the 23S rRNA in the assembled 50S subunit and ribosome (By similarity).</text>
</comment>
<comment type="function">
    <text evidence="1">The globular domain of the protein is located near the polypeptide exit tunnel on the outside of the subunit, while an extended beta-hairpin is found that lines the wall of the exit tunnel in the center of the 70S ribosome.</text>
</comment>
<comment type="subunit">
    <text evidence="1">Part of the 50S ribosomal subunit.</text>
</comment>
<comment type="similarity">
    <text evidence="1">Belongs to the universal ribosomal protein uL22 family.</text>
</comment>
<sequence>MEAKAIGKTIRIAPRKVRLVVDLIRGKNVKEAQAILMFTPRGASPVIAKVLDSAIANRTHNLNLNLENLFVKEVWANESITMKRMLPRAKGSGHLIRKRTSHITVVVAERE</sequence>
<accession>P29222</accession>
<evidence type="ECO:0000255" key="1">
    <source>
        <dbReference type="HAMAP-Rule" id="MF_01331"/>
    </source>
</evidence>
<evidence type="ECO:0000305" key="2"/>
<dbReference type="EMBL" id="M74771">
    <property type="protein sequence ID" value="AAA21913.1"/>
    <property type="molecule type" value="Genomic_DNA"/>
</dbReference>
<dbReference type="PIR" id="C41839">
    <property type="entry name" value="C41839"/>
</dbReference>
<dbReference type="SMR" id="P29222"/>
<dbReference type="GO" id="GO:0022625">
    <property type="term" value="C:cytosolic large ribosomal subunit"/>
    <property type="evidence" value="ECO:0007669"/>
    <property type="project" value="TreeGrafter"/>
</dbReference>
<dbReference type="GO" id="GO:0019843">
    <property type="term" value="F:rRNA binding"/>
    <property type="evidence" value="ECO:0007669"/>
    <property type="project" value="UniProtKB-UniRule"/>
</dbReference>
<dbReference type="GO" id="GO:0003735">
    <property type="term" value="F:structural constituent of ribosome"/>
    <property type="evidence" value="ECO:0007669"/>
    <property type="project" value="InterPro"/>
</dbReference>
<dbReference type="GO" id="GO:0006412">
    <property type="term" value="P:translation"/>
    <property type="evidence" value="ECO:0007669"/>
    <property type="project" value="UniProtKB-UniRule"/>
</dbReference>
<dbReference type="CDD" id="cd00336">
    <property type="entry name" value="Ribosomal_L22"/>
    <property type="match status" value="1"/>
</dbReference>
<dbReference type="Gene3D" id="3.90.470.10">
    <property type="entry name" value="Ribosomal protein L22/L17"/>
    <property type="match status" value="1"/>
</dbReference>
<dbReference type="HAMAP" id="MF_01331_B">
    <property type="entry name" value="Ribosomal_uL22_B"/>
    <property type="match status" value="1"/>
</dbReference>
<dbReference type="InterPro" id="IPR001063">
    <property type="entry name" value="Ribosomal_uL22"/>
</dbReference>
<dbReference type="InterPro" id="IPR005727">
    <property type="entry name" value="Ribosomal_uL22_bac/chlpt-type"/>
</dbReference>
<dbReference type="InterPro" id="IPR047867">
    <property type="entry name" value="Ribosomal_uL22_bac/org-type"/>
</dbReference>
<dbReference type="InterPro" id="IPR018260">
    <property type="entry name" value="Ribosomal_uL22_CS"/>
</dbReference>
<dbReference type="InterPro" id="IPR036394">
    <property type="entry name" value="Ribosomal_uL22_sf"/>
</dbReference>
<dbReference type="NCBIfam" id="TIGR01044">
    <property type="entry name" value="rplV_bact"/>
    <property type="match status" value="1"/>
</dbReference>
<dbReference type="PANTHER" id="PTHR13501">
    <property type="entry name" value="CHLOROPLAST 50S RIBOSOMAL PROTEIN L22-RELATED"/>
    <property type="match status" value="1"/>
</dbReference>
<dbReference type="PANTHER" id="PTHR13501:SF8">
    <property type="entry name" value="LARGE RIBOSOMAL SUBUNIT PROTEIN UL22M"/>
    <property type="match status" value="1"/>
</dbReference>
<dbReference type="Pfam" id="PF00237">
    <property type="entry name" value="Ribosomal_L22"/>
    <property type="match status" value="1"/>
</dbReference>
<dbReference type="SUPFAM" id="SSF54843">
    <property type="entry name" value="Ribosomal protein L22"/>
    <property type="match status" value="1"/>
</dbReference>
<dbReference type="PROSITE" id="PS00464">
    <property type="entry name" value="RIBOSOMAL_L22"/>
    <property type="match status" value="1"/>
</dbReference>